<reference key="1">
    <citation type="journal article" date="2005" name="BMC Biol.">
        <title>The sequence of rice chromosomes 11 and 12, rich in disease resistance genes and recent gene duplications.</title>
        <authorList>
            <consortium name="The rice chromosomes 11 and 12 sequencing consortia"/>
        </authorList>
    </citation>
    <scope>NUCLEOTIDE SEQUENCE [LARGE SCALE GENOMIC DNA]</scope>
    <source>
        <strain>cv. Nipponbare</strain>
    </source>
</reference>
<reference key="2">
    <citation type="journal article" date="2005" name="Nature">
        <title>The map-based sequence of the rice genome.</title>
        <authorList>
            <consortium name="International rice genome sequencing project (IRGSP)"/>
        </authorList>
    </citation>
    <scope>NUCLEOTIDE SEQUENCE [LARGE SCALE GENOMIC DNA]</scope>
    <source>
        <strain>cv. Nipponbare</strain>
    </source>
</reference>
<reference key="3">
    <citation type="journal article" date="2008" name="Nucleic Acids Res.">
        <title>The rice annotation project database (RAP-DB): 2008 update.</title>
        <authorList>
            <consortium name="The rice annotation project (RAP)"/>
        </authorList>
    </citation>
    <scope>GENOME REANNOTATION</scope>
    <source>
        <strain>cv. Nipponbare</strain>
    </source>
</reference>
<reference key="4">
    <citation type="journal article" date="2013" name="Rice">
        <title>Improvement of the Oryza sativa Nipponbare reference genome using next generation sequence and optical map data.</title>
        <authorList>
            <person name="Kawahara Y."/>
            <person name="de la Bastide M."/>
            <person name="Hamilton J.P."/>
            <person name="Kanamori H."/>
            <person name="McCombie W.R."/>
            <person name="Ouyang S."/>
            <person name="Schwartz D.C."/>
            <person name="Tanaka T."/>
            <person name="Wu J."/>
            <person name="Zhou S."/>
            <person name="Childs K.L."/>
            <person name="Davidson R.M."/>
            <person name="Lin H."/>
            <person name="Quesada-Ocampo L."/>
            <person name="Vaillancourt B."/>
            <person name="Sakai H."/>
            <person name="Lee S.S."/>
            <person name="Kim J."/>
            <person name="Numa H."/>
            <person name="Itoh T."/>
            <person name="Buell C.R."/>
            <person name="Matsumoto T."/>
        </authorList>
    </citation>
    <scope>GENOME REANNOTATION</scope>
    <source>
        <strain>cv. Nipponbare</strain>
    </source>
</reference>
<reference key="5">
    <citation type="journal article" date="2006" name="Funct. Integr. Genomics">
        <title>Structure and expression analysis of early auxin-responsive Aux/IAA gene family in rice (Oryza sativa).</title>
        <authorList>
            <person name="Jain M."/>
            <person name="Kaur N."/>
            <person name="Garg R."/>
            <person name="Thakur J.K."/>
            <person name="Tyagi A.K."/>
            <person name="Khurana J.P."/>
        </authorList>
    </citation>
    <scope>TISSUE SPECIFICITY</scope>
    <scope>INDUCTION</scope>
    <scope>NOMENCLATURE</scope>
</reference>
<protein>
    <recommendedName>
        <fullName>Auxin-responsive protein IAA27</fullName>
    </recommendedName>
    <alternativeName>
        <fullName>Indoleacetic acid-induced protein 27</fullName>
    </alternativeName>
</protein>
<gene>
    <name type="primary">IAA27</name>
    <name type="ordered locus">Os11g0221000</name>
    <name type="ordered locus">LOC_Os11g11410</name>
</gene>
<dbReference type="EMBL" id="DP000010">
    <property type="protein sequence ID" value="ABA92104.2"/>
    <property type="molecule type" value="Genomic_DNA"/>
</dbReference>
<dbReference type="EMBL" id="AP008217">
    <property type="protein sequence ID" value="BAF27888.1"/>
    <property type="status" value="ALT_SEQ"/>
    <property type="molecule type" value="Genomic_DNA"/>
</dbReference>
<dbReference type="EMBL" id="AP014967">
    <property type="status" value="NOT_ANNOTATED_CDS"/>
    <property type="molecule type" value="Genomic_DNA"/>
</dbReference>
<dbReference type="SMR" id="P0C129"/>
<dbReference type="FunCoup" id="P0C129">
    <property type="interactions" value="764"/>
</dbReference>
<dbReference type="PaxDb" id="39947-P0C129"/>
<dbReference type="KEGG" id="dosa:Os11g0221000"/>
<dbReference type="eggNOG" id="ENOG502S0RH">
    <property type="taxonomic scope" value="Eukaryota"/>
</dbReference>
<dbReference type="InParanoid" id="P0C129"/>
<dbReference type="PlantReactome" id="R-OSA-5608118">
    <property type="pathway name" value="Auxin signalling"/>
</dbReference>
<dbReference type="Proteomes" id="UP000000763">
    <property type="component" value="Chromosome 11"/>
</dbReference>
<dbReference type="Proteomes" id="UP000059680">
    <property type="component" value="Chromosome 11"/>
</dbReference>
<dbReference type="GO" id="GO:0005634">
    <property type="term" value="C:nucleus"/>
    <property type="evidence" value="ECO:0007669"/>
    <property type="project" value="UniProtKB-SubCell"/>
</dbReference>
<dbReference type="GO" id="GO:0009734">
    <property type="term" value="P:auxin-activated signaling pathway"/>
    <property type="evidence" value="ECO:0007669"/>
    <property type="project" value="UniProtKB-KW"/>
</dbReference>
<dbReference type="GO" id="GO:0006355">
    <property type="term" value="P:regulation of DNA-templated transcription"/>
    <property type="evidence" value="ECO:0007669"/>
    <property type="project" value="InterPro"/>
</dbReference>
<dbReference type="Gene3D" id="3.10.20.90">
    <property type="entry name" value="Phosphatidylinositol 3-kinase Catalytic Subunit, Chain A, domain 1"/>
    <property type="match status" value="1"/>
</dbReference>
<dbReference type="InterPro" id="IPR033389">
    <property type="entry name" value="AUX/IAA_dom"/>
</dbReference>
<dbReference type="InterPro" id="IPR003311">
    <property type="entry name" value="AUX_IAA"/>
</dbReference>
<dbReference type="InterPro" id="IPR053793">
    <property type="entry name" value="PB1-like"/>
</dbReference>
<dbReference type="PANTHER" id="PTHR31734">
    <property type="entry name" value="AUXIN-RESPONSIVE PROTEIN IAA17"/>
    <property type="match status" value="1"/>
</dbReference>
<dbReference type="PANTHER" id="PTHR31734:SF35">
    <property type="entry name" value="AUXIN-RESPONSIVE PROTEIN IAA27"/>
    <property type="match status" value="1"/>
</dbReference>
<dbReference type="Pfam" id="PF02309">
    <property type="entry name" value="AUX_IAA"/>
    <property type="match status" value="1"/>
</dbReference>
<dbReference type="SUPFAM" id="SSF54277">
    <property type="entry name" value="CAD &amp; PB1 domains"/>
    <property type="match status" value="1"/>
</dbReference>
<dbReference type="PROSITE" id="PS51745">
    <property type="entry name" value="PB1"/>
    <property type="match status" value="1"/>
</dbReference>
<accession>P0C129</accession>
<accession>Q0ITS7</accession>
<accession>Q2R8Q1</accession>
<evidence type="ECO:0000250" key="1"/>
<evidence type="ECO:0000255" key="2">
    <source>
        <dbReference type="PROSITE-ProRule" id="PRU01081"/>
    </source>
</evidence>
<evidence type="ECO:0000256" key="3">
    <source>
        <dbReference type="SAM" id="MobiDB-lite"/>
    </source>
</evidence>
<evidence type="ECO:0000269" key="4">
    <source>
    </source>
</evidence>
<evidence type="ECO:0000305" key="5"/>
<sequence length="351" mass="36952">MMNLISFETPPLGRRSQDGGSSSSSITAATTTTNKAKEAASHLDLSLGISLSPGGGGGDAGTKASSCCYGGGGDGGGCMGSGMLTAGVLGVGHGGSSHDNTTASSGGGGSWTAAFMPSPTGFMHPWSLAARQQKAAAEQERSGVARLPPATTTYMPRAAATVISLPAAVGWPPVHTSRRNLVATINNVLKPDTTAAVKPDRPTQATAMFAADETTAPPPRSAAAATEASRTLNMFAKVHMDGYKVGRKINLRAHRNYDSLRRVLTKMTHNFFCPADYSSTNKGEEDCAKSDEFIFLYEDFEGDRMLVGDVPWELFLASAKRLYIAKNPAPRNKGTYRPLVWICMLLPKAPY</sequence>
<name>IAA27_ORYSJ</name>
<proteinExistence type="evidence at transcript level"/>
<organism>
    <name type="scientific">Oryza sativa subsp. japonica</name>
    <name type="common">Rice</name>
    <dbReference type="NCBI Taxonomy" id="39947"/>
    <lineage>
        <taxon>Eukaryota</taxon>
        <taxon>Viridiplantae</taxon>
        <taxon>Streptophyta</taxon>
        <taxon>Embryophyta</taxon>
        <taxon>Tracheophyta</taxon>
        <taxon>Spermatophyta</taxon>
        <taxon>Magnoliopsida</taxon>
        <taxon>Liliopsida</taxon>
        <taxon>Poales</taxon>
        <taxon>Poaceae</taxon>
        <taxon>BOP clade</taxon>
        <taxon>Oryzoideae</taxon>
        <taxon>Oryzeae</taxon>
        <taxon>Oryzinae</taxon>
        <taxon>Oryza</taxon>
        <taxon>Oryza sativa</taxon>
    </lineage>
</organism>
<comment type="function">
    <text evidence="1">Aux/IAA proteins are short-lived transcriptional factors that function as repressors of early auxin response genes at low auxin concentrations.</text>
</comment>
<comment type="subunit">
    <text evidence="1">Homodimers and heterodimers.</text>
</comment>
<comment type="subcellular location">
    <subcellularLocation>
        <location evidence="1">Nucleus</location>
    </subcellularLocation>
</comment>
<comment type="tissue specificity">
    <text evidence="4">Expressed in roots and seedlings.</text>
</comment>
<comment type="induction">
    <text evidence="4">By auxin.</text>
</comment>
<comment type="miscellaneous">
    <text>Lacks the EAR-like motif (domain I) which is conserved in the Aux/IAA family.</text>
</comment>
<comment type="similarity">
    <text evidence="5">Belongs to the Aux/IAA family.</text>
</comment>
<comment type="sequence caution" evidence="5">
    <conflict type="erroneous gene model prediction">
        <sequence resource="EMBL-CDS" id="BAF27888"/>
    </conflict>
</comment>
<keyword id="KW-0927">Auxin signaling pathway</keyword>
<keyword id="KW-0539">Nucleus</keyword>
<keyword id="KW-1185">Reference proteome</keyword>
<keyword id="KW-0678">Repressor</keyword>
<keyword id="KW-0804">Transcription</keyword>
<keyword id="KW-0805">Transcription regulation</keyword>
<feature type="chain" id="PRO_0000223226" description="Auxin-responsive protein IAA27">
    <location>
        <begin position="1"/>
        <end position="351"/>
    </location>
</feature>
<feature type="domain" description="PB1" evidence="2">
    <location>
        <begin position="233"/>
        <end position="327"/>
    </location>
</feature>
<feature type="region of interest" description="Disordered" evidence="3">
    <location>
        <begin position="1"/>
        <end position="37"/>
    </location>
</feature>
<feature type="compositionally biased region" description="Low complexity" evidence="3">
    <location>
        <begin position="21"/>
        <end position="34"/>
    </location>
</feature>